<accession>Q3URE1</accession>
<accession>Q78IW2</accession>
<accession>Q8VC75</accession>
<proteinExistence type="evidence at protein level"/>
<evidence type="ECO:0000250" key="1"/>
<evidence type="ECO:0000250" key="2">
    <source>
        <dbReference type="UniProtKB" id="Q4G176"/>
    </source>
</evidence>
<evidence type="ECO:0000255" key="3"/>
<evidence type="ECO:0000303" key="4">
    <source>
    </source>
</evidence>
<evidence type="ECO:0000305" key="5"/>
<evidence type="ECO:0000312" key="6">
    <source>
        <dbReference type="MGI" id="MGI:2182591"/>
    </source>
</evidence>
<reference key="1">
    <citation type="journal article" date="2005" name="Science">
        <title>The transcriptional landscape of the mammalian genome.</title>
        <authorList>
            <person name="Carninci P."/>
            <person name="Kasukawa T."/>
            <person name="Katayama S."/>
            <person name="Gough J."/>
            <person name="Frith M.C."/>
            <person name="Maeda N."/>
            <person name="Oyama R."/>
            <person name="Ravasi T."/>
            <person name="Lenhard B."/>
            <person name="Wells C."/>
            <person name="Kodzius R."/>
            <person name="Shimokawa K."/>
            <person name="Bajic V.B."/>
            <person name="Brenner S.E."/>
            <person name="Batalov S."/>
            <person name="Forrest A.R."/>
            <person name="Zavolan M."/>
            <person name="Davis M.J."/>
            <person name="Wilming L.G."/>
            <person name="Aidinis V."/>
            <person name="Allen J.E."/>
            <person name="Ambesi-Impiombato A."/>
            <person name="Apweiler R."/>
            <person name="Aturaliya R.N."/>
            <person name="Bailey T.L."/>
            <person name="Bansal M."/>
            <person name="Baxter L."/>
            <person name="Beisel K.W."/>
            <person name="Bersano T."/>
            <person name="Bono H."/>
            <person name="Chalk A.M."/>
            <person name="Chiu K.P."/>
            <person name="Choudhary V."/>
            <person name="Christoffels A."/>
            <person name="Clutterbuck D.R."/>
            <person name="Crowe M.L."/>
            <person name="Dalla E."/>
            <person name="Dalrymple B.P."/>
            <person name="de Bono B."/>
            <person name="Della Gatta G."/>
            <person name="di Bernardo D."/>
            <person name="Down T."/>
            <person name="Engstrom P."/>
            <person name="Fagiolini M."/>
            <person name="Faulkner G."/>
            <person name="Fletcher C.F."/>
            <person name="Fukushima T."/>
            <person name="Furuno M."/>
            <person name="Futaki S."/>
            <person name="Gariboldi M."/>
            <person name="Georgii-Hemming P."/>
            <person name="Gingeras T.R."/>
            <person name="Gojobori T."/>
            <person name="Green R.E."/>
            <person name="Gustincich S."/>
            <person name="Harbers M."/>
            <person name="Hayashi Y."/>
            <person name="Hensch T.K."/>
            <person name="Hirokawa N."/>
            <person name="Hill D."/>
            <person name="Huminiecki L."/>
            <person name="Iacono M."/>
            <person name="Ikeo K."/>
            <person name="Iwama A."/>
            <person name="Ishikawa T."/>
            <person name="Jakt M."/>
            <person name="Kanapin A."/>
            <person name="Katoh M."/>
            <person name="Kawasawa Y."/>
            <person name="Kelso J."/>
            <person name="Kitamura H."/>
            <person name="Kitano H."/>
            <person name="Kollias G."/>
            <person name="Krishnan S.P."/>
            <person name="Kruger A."/>
            <person name="Kummerfeld S.K."/>
            <person name="Kurochkin I.V."/>
            <person name="Lareau L.F."/>
            <person name="Lazarevic D."/>
            <person name="Lipovich L."/>
            <person name="Liu J."/>
            <person name="Liuni S."/>
            <person name="McWilliam S."/>
            <person name="Madan Babu M."/>
            <person name="Madera M."/>
            <person name="Marchionni L."/>
            <person name="Matsuda H."/>
            <person name="Matsuzawa S."/>
            <person name="Miki H."/>
            <person name="Mignone F."/>
            <person name="Miyake S."/>
            <person name="Morris K."/>
            <person name="Mottagui-Tabar S."/>
            <person name="Mulder N."/>
            <person name="Nakano N."/>
            <person name="Nakauchi H."/>
            <person name="Ng P."/>
            <person name="Nilsson R."/>
            <person name="Nishiguchi S."/>
            <person name="Nishikawa S."/>
            <person name="Nori F."/>
            <person name="Ohara O."/>
            <person name="Okazaki Y."/>
            <person name="Orlando V."/>
            <person name="Pang K.C."/>
            <person name="Pavan W.J."/>
            <person name="Pavesi G."/>
            <person name="Pesole G."/>
            <person name="Petrovsky N."/>
            <person name="Piazza S."/>
            <person name="Reed J."/>
            <person name="Reid J.F."/>
            <person name="Ring B.Z."/>
            <person name="Ringwald M."/>
            <person name="Rost B."/>
            <person name="Ruan Y."/>
            <person name="Salzberg S.L."/>
            <person name="Sandelin A."/>
            <person name="Schneider C."/>
            <person name="Schoenbach C."/>
            <person name="Sekiguchi K."/>
            <person name="Semple C.A."/>
            <person name="Seno S."/>
            <person name="Sessa L."/>
            <person name="Sheng Y."/>
            <person name="Shibata Y."/>
            <person name="Shimada H."/>
            <person name="Shimada K."/>
            <person name="Silva D."/>
            <person name="Sinclair B."/>
            <person name="Sperling S."/>
            <person name="Stupka E."/>
            <person name="Sugiura K."/>
            <person name="Sultana R."/>
            <person name="Takenaka Y."/>
            <person name="Taki K."/>
            <person name="Tammoja K."/>
            <person name="Tan S.L."/>
            <person name="Tang S."/>
            <person name="Taylor M.S."/>
            <person name="Tegner J."/>
            <person name="Teichmann S.A."/>
            <person name="Ueda H.R."/>
            <person name="van Nimwegen E."/>
            <person name="Verardo R."/>
            <person name="Wei C.L."/>
            <person name="Yagi K."/>
            <person name="Yamanishi H."/>
            <person name="Zabarovsky E."/>
            <person name="Zhu S."/>
            <person name="Zimmer A."/>
            <person name="Hide W."/>
            <person name="Bult C."/>
            <person name="Grimmond S.M."/>
            <person name="Teasdale R.D."/>
            <person name="Liu E.T."/>
            <person name="Brusic V."/>
            <person name="Quackenbush J."/>
            <person name="Wahlestedt C."/>
            <person name="Mattick J.S."/>
            <person name="Hume D.A."/>
            <person name="Kai C."/>
            <person name="Sasaki D."/>
            <person name="Tomaru Y."/>
            <person name="Fukuda S."/>
            <person name="Kanamori-Katayama M."/>
            <person name="Suzuki M."/>
            <person name="Aoki J."/>
            <person name="Arakawa T."/>
            <person name="Iida J."/>
            <person name="Imamura K."/>
            <person name="Itoh M."/>
            <person name="Kato T."/>
            <person name="Kawaji H."/>
            <person name="Kawagashira N."/>
            <person name="Kawashima T."/>
            <person name="Kojima M."/>
            <person name="Kondo S."/>
            <person name="Konno H."/>
            <person name="Nakano K."/>
            <person name="Ninomiya N."/>
            <person name="Nishio T."/>
            <person name="Okada M."/>
            <person name="Plessy C."/>
            <person name="Shibata K."/>
            <person name="Shiraki T."/>
            <person name="Suzuki S."/>
            <person name="Tagami M."/>
            <person name="Waki K."/>
            <person name="Watahiki A."/>
            <person name="Okamura-Oho Y."/>
            <person name="Suzuki H."/>
            <person name="Kawai J."/>
            <person name="Hayashizaki Y."/>
        </authorList>
    </citation>
    <scope>NUCLEOTIDE SEQUENCE [LARGE SCALE MRNA] (ISOFORM 2)</scope>
    <source>
        <strain>C57BL/6J</strain>
        <tissue>Hippocampus</tissue>
    </source>
</reference>
<reference key="2">
    <citation type="journal article" date="2004" name="Genome Res.">
        <title>The status, quality, and expansion of the NIH full-length cDNA project: the Mammalian Gene Collection (MGC).</title>
        <authorList>
            <consortium name="The MGC Project Team"/>
        </authorList>
    </citation>
    <scope>NUCLEOTIDE SEQUENCE [LARGE SCALE MRNA] OF 193-583 (ISOFORM 1)</scope>
    <source>
        <strain>FVB/N</strain>
        <tissue>Mammary tumor</tissue>
    </source>
</reference>
<reference key="3">
    <citation type="journal article" date="2010" name="Cell">
        <title>A tissue-specific atlas of mouse protein phosphorylation and expression.</title>
        <authorList>
            <person name="Huttlin E.L."/>
            <person name="Jedrychowski M.P."/>
            <person name="Elias J.E."/>
            <person name="Goswami T."/>
            <person name="Rad R."/>
            <person name="Beausoleil S.A."/>
            <person name="Villen J."/>
            <person name="Haas W."/>
            <person name="Sowa M.E."/>
            <person name="Gygi S.P."/>
        </authorList>
    </citation>
    <scope>IDENTIFICATION BY MASS SPECTROMETRY [LARGE SCALE ANALYSIS]</scope>
    <source>
        <tissue>Brain</tissue>
        <tissue>Brown adipose tissue</tissue>
        <tissue>Heart</tissue>
        <tissue>Kidney</tissue>
        <tissue>Liver</tissue>
        <tissue>Spleen</tissue>
    </source>
</reference>
<gene>
    <name evidence="6" type="primary">Acsf3</name>
</gene>
<feature type="transit peptide" description="Mitochondrion" evidence="3">
    <location>
        <begin position="1"/>
        <end position="27"/>
    </location>
</feature>
<feature type="chain" id="PRO_0000315801" description="Malonate--CoA ligase ACSF3, mitochondrial">
    <location>
        <begin position="28"/>
        <end position="583"/>
    </location>
</feature>
<feature type="binding site" evidence="1">
    <location>
        <begin position="202"/>
        <end position="210"/>
    </location>
    <ligand>
        <name>ATP</name>
        <dbReference type="ChEBI" id="CHEBI:30616"/>
    </ligand>
</feature>
<feature type="binding site" evidence="1">
    <location>
        <position position="455"/>
    </location>
    <ligand>
        <name>ATP</name>
        <dbReference type="ChEBI" id="CHEBI:30616"/>
    </ligand>
</feature>
<feature type="binding site" evidence="1">
    <location>
        <position position="469"/>
    </location>
    <ligand>
        <name>ATP</name>
        <dbReference type="ChEBI" id="CHEBI:30616"/>
    </ligand>
</feature>
<feature type="binding site" evidence="1">
    <location>
        <position position="561"/>
    </location>
    <ligand>
        <name>ATP</name>
        <dbReference type="ChEBI" id="CHEBI:30616"/>
    </ligand>
</feature>
<feature type="splice variant" id="VSP_030705" description="In isoform 2." evidence="4">
    <original>LMVSGSAALPVPLLEKWRSATGHTLLERYGMTEIGMALSNP</original>
    <variation>FCGDPIARSGSTHHLRKPAEGFPLHHPCRGKREGDKGEVIV</variation>
    <location>
        <begin position="327"/>
        <end position="367"/>
    </location>
</feature>
<feature type="splice variant" id="VSP_030706" description="In isoform 2." evidence="4">
    <location>
        <begin position="368"/>
        <end position="583"/>
    </location>
</feature>
<name>ACSF3_MOUSE</name>
<keyword id="KW-0025">Alternative splicing</keyword>
<keyword id="KW-0067">ATP-binding</keyword>
<keyword id="KW-0276">Fatty acid metabolism</keyword>
<keyword id="KW-0436">Ligase</keyword>
<keyword id="KW-0443">Lipid metabolism</keyword>
<keyword id="KW-0496">Mitochondrion</keyword>
<keyword id="KW-0547">Nucleotide-binding</keyword>
<keyword id="KW-1185">Reference proteome</keyword>
<keyword id="KW-0809">Transit peptide</keyword>
<organism>
    <name type="scientific">Mus musculus</name>
    <name type="common">Mouse</name>
    <dbReference type="NCBI Taxonomy" id="10090"/>
    <lineage>
        <taxon>Eukaryota</taxon>
        <taxon>Metazoa</taxon>
        <taxon>Chordata</taxon>
        <taxon>Craniata</taxon>
        <taxon>Vertebrata</taxon>
        <taxon>Euteleostomi</taxon>
        <taxon>Mammalia</taxon>
        <taxon>Eutheria</taxon>
        <taxon>Euarchontoglires</taxon>
        <taxon>Glires</taxon>
        <taxon>Rodentia</taxon>
        <taxon>Myomorpha</taxon>
        <taxon>Muroidea</taxon>
        <taxon>Muridae</taxon>
        <taxon>Murinae</taxon>
        <taxon>Mus</taxon>
        <taxon>Mus</taxon>
    </lineage>
</organism>
<protein>
    <recommendedName>
        <fullName evidence="5">Malonate--CoA ligase ACSF3, mitochondrial</fullName>
        <ecNumber evidence="2">6.2.1.76</ecNumber>
    </recommendedName>
    <alternativeName>
        <fullName>Acyl-CoA synthetase family member 3</fullName>
    </alternativeName>
</protein>
<sequence>MPPHLALPFRRLFWSLASSQLIPRRHRGHSLLPTTPEAHTDGSVPVFIRALAFGDRIALIDKYGHHTYRELYDRSLCLAQEICRLQGCKVGDLQEERVSFLCSNDVSYVVAQWASWMSGGVAVPLYWKHPEAQLEYFIQDSRSSLVVVGQEYLERLSPLAQRLGVPLLPLTPAVYHGATEKPTEQPVEESGWRDRGAMIFYTSGTTGRPKGALSTHRNLAAVVTGLVHSWAWTKNDVILHVLPLHHVHGVVNKLLCPLWVGATCVMLPEFSAQQVWEKFLSSEAPQITVFMAVPTVYSKLLDYYDKHFTQPHVQDFVRAVCKERIRLMVSGSAALPVPLLEKWRSATGHTLLERYGMTEIGMALSNPLTEARVPGSVGTPLPGVEVRIISENPQKGSPYIIHAEGNERGTKVTPGFEEKEGELLVRGPSVFREYWDKPEETKSAFTSDGWFRTGDTAVFKDARYWIRGRTSVDIIKTGGYKVSALEIERHLLAHPSITDVAVIGVPDMTWGQRVTAVVALQEGHSLSHGDLKEWARGVLAPYAVPSELLLVEEIPRNQMGKVNKKELLKQLYPSGQRSQPGQG</sequence>
<dbReference type="EC" id="6.2.1.76" evidence="2"/>
<dbReference type="EMBL" id="AK141579">
    <property type="protein sequence ID" value="BAE24747.1"/>
    <property type="molecule type" value="mRNA"/>
</dbReference>
<dbReference type="EMBL" id="BC022709">
    <property type="protein sequence ID" value="AAH22709.3"/>
    <property type="status" value="ALT_INIT"/>
    <property type="molecule type" value="mRNA"/>
</dbReference>
<dbReference type="CCDS" id="CCDS40505.1">
    <molecule id="Q3URE1-1"/>
</dbReference>
<dbReference type="RefSeq" id="NP_659181.2">
    <molecule id="Q3URE1-1"/>
    <property type="nucleotide sequence ID" value="NM_144932.4"/>
</dbReference>
<dbReference type="RefSeq" id="XP_006531093.1">
    <molecule id="Q3URE1-1"/>
    <property type="nucleotide sequence ID" value="XM_006531030.3"/>
</dbReference>
<dbReference type="RefSeq" id="XP_006531094.1">
    <property type="nucleotide sequence ID" value="XM_006531031.1"/>
</dbReference>
<dbReference type="RefSeq" id="XP_006531095.1">
    <molecule id="Q3URE1-1"/>
    <property type="nucleotide sequence ID" value="XM_006531032.4"/>
</dbReference>
<dbReference type="RefSeq" id="XP_030099428.1">
    <molecule id="Q3URE1-1"/>
    <property type="nucleotide sequence ID" value="XM_030243568.1"/>
</dbReference>
<dbReference type="RefSeq" id="XP_030099430.1">
    <molecule id="Q3URE1-1"/>
    <property type="nucleotide sequence ID" value="XM_030243570.1"/>
</dbReference>
<dbReference type="RefSeq" id="XP_036009945.1">
    <molecule id="Q3URE1-1"/>
    <property type="nucleotide sequence ID" value="XM_036154052.1"/>
</dbReference>
<dbReference type="SMR" id="Q3URE1"/>
<dbReference type="BioGRID" id="232989">
    <property type="interactions" value="1"/>
</dbReference>
<dbReference type="FunCoup" id="Q3URE1">
    <property type="interactions" value="2108"/>
</dbReference>
<dbReference type="STRING" id="10090.ENSMUSP00000015160"/>
<dbReference type="GlyGen" id="Q3URE1">
    <property type="glycosylation" value="1 site"/>
</dbReference>
<dbReference type="iPTMnet" id="Q3URE1"/>
<dbReference type="PhosphoSitePlus" id="Q3URE1"/>
<dbReference type="SwissPalm" id="Q3URE1"/>
<dbReference type="jPOST" id="Q3URE1"/>
<dbReference type="PaxDb" id="10090-ENSMUSP00000015160"/>
<dbReference type="PeptideAtlas" id="Q3URE1"/>
<dbReference type="ProteomicsDB" id="285847">
    <molecule id="Q3URE1-1"/>
</dbReference>
<dbReference type="ProteomicsDB" id="285848">
    <molecule id="Q3URE1-2"/>
</dbReference>
<dbReference type="Pumba" id="Q3URE1"/>
<dbReference type="Antibodypedia" id="2033">
    <property type="antibodies" value="108 antibodies from 19 providers"/>
</dbReference>
<dbReference type="DNASU" id="257633"/>
<dbReference type="Ensembl" id="ENSMUST00000015160.6">
    <molecule id="Q3URE1-1"/>
    <property type="protein sequence ID" value="ENSMUSP00000015160.6"/>
    <property type="gene ID" value="ENSMUSG00000015016.9"/>
</dbReference>
<dbReference type="Ensembl" id="ENSMUST00000212790.2">
    <molecule id="Q3URE1-1"/>
    <property type="protein sequence ID" value="ENSMUSP00000148762.2"/>
    <property type="gene ID" value="ENSMUSG00000015016.9"/>
</dbReference>
<dbReference type="GeneID" id="257633"/>
<dbReference type="KEGG" id="mmu:257633"/>
<dbReference type="UCSC" id="uc009ntr.1">
    <molecule id="Q3URE1-2"/>
    <property type="organism name" value="mouse"/>
</dbReference>
<dbReference type="UCSC" id="uc009nts.1">
    <molecule id="Q3URE1-1"/>
    <property type="organism name" value="mouse"/>
</dbReference>
<dbReference type="AGR" id="MGI:2182591"/>
<dbReference type="CTD" id="197322"/>
<dbReference type="MGI" id="MGI:2182591">
    <property type="gene designation" value="Acsf3"/>
</dbReference>
<dbReference type="VEuPathDB" id="HostDB:ENSMUSG00000015016"/>
<dbReference type="eggNOG" id="KOG1176">
    <property type="taxonomic scope" value="Eukaryota"/>
</dbReference>
<dbReference type="GeneTree" id="ENSGT00940000157000"/>
<dbReference type="HOGENOM" id="CLU_000022_59_11_1"/>
<dbReference type="InParanoid" id="Q3URE1"/>
<dbReference type="OMA" id="KGKWFKT"/>
<dbReference type="OrthoDB" id="2962993at2759"/>
<dbReference type="PhylomeDB" id="Q3URE1"/>
<dbReference type="TreeFam" id="TF312995"/>
<dbReference type="Reactome" id="R-MMU-75876">
    <property type="pathway name" value="Synthesis of very long-chain fatty acyl-CoAs"/>
</dbReference>
<dbReference type="BioGRID-ORCS" id="257633">
    <property type="hits" value="6 hits in 79 CRISPR screens"/>
</dbReference>
<dbReference type="ChiTaRS" id="Acsf3">
    <property type="organism name" value="mouse"/>
</dbReference>
<dbReference type="PRO" id="PR:Q3URE1"/>
<dbReference type="Proteomes" id="UP000000589">
    <property type="component" value="Chromosome 8"/>
</dbReference>
<dbReference type="RNAct" id="Q3URE1">
    <property type="molecule type" value="protein"/>
</dbReference>
<dbReference type="Bgee" id="ENSMUSG00000015016">
    <property type="expression patterns" value="Expressed in ileal epithelium and 185 other cell types or tissues"/>
</dbReference>
<dbReference type="ExpressionAtlas" id="Q3URE1">
    <property type="expression patterns" value="baseline and differential"/>
</dbReference>
<dbReference type="GO" id="GO:0005739">
    <property type="term" value="C:mitochondrion"/>
    <property type="evidence" value="ECO:0007005"/>
    <property type="project" value="MGI"/>
</dbReference>
<dbReference type="GO" id="GO:0016878">
    <property type="term" value="F:acid-thiol ligase activity"/>
    <property type="evidence" value="ECO:0007669"/>
    <property type="project" value="Ensembl"/>
</dbReference>
<dbReference type="GO" id="GO:0005524">
    <property type="term" value="F:ATP binding"/>
    <property type="evidence" value="ECO:0007669"/>
    <property type="project" value="UniProtKB-KW"/>
</dbReference>
<dbReference type="GO" id="GO:0090409">
    <property type="term" value="F:malonyl-CoA synthetase activity"/>
    <property type="evidence" value="ECO:0007669"/>
    <property type="project" value="Ensembl"/>
</dbReference>
<dbReference type="GO" id="GO:0006633">
    <property type="term" value="P:fatty acid biosynthetic process"/>
    <property type="evidence" value="ECO:0007669"/>
    <property type="project" value="Ensembl"/>
</dbReference>
<dbReference type="GO" id="GO:0090410">
    <property type="term" value="P:malonate catabolic process"/>
    <property type="evidence" value="ECO:0007669"/>
    <property type="project" value="Ensembl"/>
</dbReference>
<dbReference type="CDD" id="cd05941">
    <property type="entry name" value="MCS"/>
    <property type="match status" value="1"/>
</dbReference>
<dbReference type="FunFam" id="3.30.300.30:FF:000031">
    <property type="entry name" value="Acyl-CoA synthetase family member 3"/>
    <property type="match status" value="1"/>
</dbReference>
<dbReference type="FunFam" id="3.40.50.12780:FF:000030">
    <property type="entry name" value="Acyl-CoA synthetase family member 3"/>
    <property type="match status" value="1"/>
</dbReference>
<dbReference type="Gene3D" id="3.30.300.30">
    <property type="match status" value="1"/>
</dbReference>
<dbReference type="Gene3D" id="3.40.50.12780">
    <property type="entry name" value="N-terminal domain of ligase-like"/>
    <property type="match status" value="1"/>
</dbReference>
<dbReference type="InterPro" id="IPR025110">
    <property type="entry name" value="AMP-bd_C"/>
</dbReference>
<dbReference type="InterPro" id="IPR045851">
    <property type="entry name" value="AMP-bd_C_sf"/>
</dbReference>
<dbReference type="InterPro" id="IPR020845">
    <property type="entry name" value="AMP-binding_CS"/>
</dbReference>
<dbReference type="InterPro" id="IPR000873">
    <property type="entry name" value="AMP-dep_synth/lig_dom"/>
</dbReference>
<dbReference type="InterPro" id="IPR042099">
    <property type="entry name" value="ANL_N_sf"/>
</dbReference>
<dbReference type="PANTHER" id="PTHR43201">
    <property type="entry name" value="ACYL-COA SYNTHETASE"/>
    <property type="match status" value="1"/>
</dbReference>
<dbReference type="PANTHER" id="PTHR43201:SF8">
    <property type="entry name" value="ACYL-COA SYNTHETASE FAMILY MEMBER 3"/>
    <property type="match status" value="1"/>
</dbReference>
<dbReference type="Pfam" id="PF00501">
    <property type="entry name" value="AMP-binding"/>
    <property type="match status" value="1"/>
</dbReference>
<dbReference type="Pfam" id="PF13193">
    <property type="entry name" value="AMP-binding_C"/>
    <property type="match status" value="1"/>
</dbReference>
<dbReference type="SUPFAM" id="SSF56801">
    <property type="entry name" value="Acetyl-CoA synthetase-like"/>
    <property type="match status" value="1"/>
</dbReference>
<dbReference type="PROSITE" id="PS00455">
    <property type="entry name" value="AMP_BINDING"/>
    <property type="match status" value="1"/>
</dbReference>
<comment type="function">
    <text evidence="2">Catalyzes the initial reaction in intramitochondrial fatty acid synthesis, by activating malonate and methylmalonate, but not acetate, into their respective CoA thioester. May have some preference toward very-long-chain substrates.</text>
</comment>
<comment type="catalytic activity">
    <reaction evidence="2">
        <text>tetracosanoate + ATP + CoA = tetracosanoyl-CoA + AMP + diphosphate</text>
        <dbReference type="Rhea" id="RHEA:33639"/>
        <dbReference type="ChEBI" id="CHEBI:30616"/>
        <dbReference type="ChEBI" id="CHEBI:31014"/>
        <dbReference type="ChEBI" id="CHEBI:33019"/>
        <dbReference type="ChEBI" id="CHEBI:57287"/>
        <dbReference type="ChEBI" id="CHEBI:65052"/>
        <dbReference type="ChEBI" id="CHEBI:456215"/>
    </reaction>
    <physiologicalReaction direction="left-to-right" evidence="2">
        <dbReference type="Rhea" id="RHEA:33640"/>
    </physiologicalReaction>
</comment>
<comment type="catalytic activity">
    <reaction evidence="2">
        <text>malonate + ATP + CoA = malonyl-CoA + AMP + diphosphate</text>
        <dbReference type="Rhea" id="RHEA:32139"/>
        <dbReference type="ChEBI" id="CHEBI:15792"/>
        <dbReference type="ChEBI" id="CHEBI:30616"/>
        <dbReference type="ChEBI" id="CHEBI:33019"/>
        <dbReference type="ChEBI" id="CHEBI:57287"/>
        <dbReference type="ChEBI" id="CHEBI:57384"/>
        <dbReference type="ChEBI" id="CHEBI:456215"/>
        <dbReference type="EC" id="6.2.1.76"/>
    </reaction>
    <physiologicalReaction direction="left-to-right" evidence="2">
        <dbReference type="Rhea" id="RHEA:32140"/>
    </physiologicalReaction>
</comment>
<comment type="subcellular location">
    <subcellularLocation>
        <location evidence="2">Mitochondrion</location>
    </subcellularLocation>
</comment>
<comment type="alternative products">
    <event type="alternative splicing"/>
    <isoform>
        <id>Q3URE1-1</id>
        <name>1</name>
        <sequence type="displayed"/>
    </isoform>
    <isoform>
        <id>Q3URE1-2</id>
        <name>2</name>
        <sequence type="described" ref="VSP_030705 VSP_030706"/>
    </isoform>
</comment>
<comment type="similarity">
    <text evidence="5">Belongs to the ATP-dependent AMP-binding enzyme family.</text>
</comment>
<comment type="sequence caution" evidence="5">
    <conflict type="erroneous initiation">
        <sequence resource="EMBL-CDS" id="AAH22709"/>
    </conflict>
</comment>